<proteinExistence type="inferred from homology"/>
<keyword id="KW-0143">Chaperone</keyword>
<keyword id="KW-1029">Fimbrium biogenesis</keyword>
<keyword id="KW-0393">Immunoglobulin domain</keyword>
<keyword id="KW-0574">Periplasm</keyword>
<keyword id="KW-0614">Plasmid</keyword>
<keyword id="KW-0732">Signal</keyword>
<evidence type="ECO:0000250" key="1"/>
<evidence type="ECO:0000255" key="2"/>
<evidence type="ECO:0000305" key="3"/>
<protein>
    <recommendedName>
        <fullName>Chaperone protein AggD</fullName>
    </recommendedName>
</protein>
<geneLocation type="plasmid">
    <name>P17-2</name>
</geneLocation>
<sequence length="252" mass="28161">MKIRRIVSTIAIALSVFTFAHAQSFENVENNAKVFSLHLGATRMIYKPNSSGETLAVINEHNYPILVQANVLSEDQKNIAPFIITPPLFRLDALQSSRLRIVKTEGAFPIDRESLQWICVKAIPPKYEDKWAKEEVSGKKSDKATMNIQVSVSSCIKLFVRPADVKGQPDDVAGKIKWQKVGNKLKGVNPTPFYMDIAELRVGEKEITETHYIAPFSSYEYPMPVNGGGDVRWKVVTDYGGISKTFETGLNI</sequence>
<comment type="function">
    <text>Involved in the biogenesis of the AAF/I fimbriae.</text>
</comment>
<comment type="subcellular location">
    <subcellularLocation>
        <location evidence="1">Periplasm</location>
    </subcellularLocation>
</comment>
<comment type="similarity">
    <text evidence="3">Belongs to the periplasmic pilus chaperone family.</text>
</comment>
<dbReference type="EMBL" id="U12894">
    <property type="protein sequence ID" value="AAA57451.1"/>
    <property type="molecule type" value="Genomic_DNA"/>
</dbReference>
<dbReference type="PIR" id="A55853">
    <property type="entry name" value="A55853"/>
</dbReference>
<dbReference type="RefSeq" id="WP_032154288.1">
    <property type="nucleotide sequence ID" value="NZ_WNTS01000037.1"/>
</dbReference>
<dbReference type="SMR" id="P46004"/>
<dbReference type="GO" id="GO:0030288">
    <property type="term" value="C:outer membrane-bounded periplasmic space"/>
    <property type="evidence" value="ECO:0007669"/>
    <property type="project" value="InterPro"/>
</dbReference>
<dbReference type="GO" id="GO:0071555">
    <property type="term" value="P:cell wall organization"/>
    <property type="evidence" value="ECO:0007669"/>
    <property type="project" value="InterPro"/>
</dbReference>
<dbReference type="GO" id="GO:0061077">
    <property type="term" value="P:chaperone-mediated protein folding"/>
    <property type="evidence" value="ECO:0007669"/>
    <property type="project" value="InterPro"/>
</dbReference>
<dbReference type="Gene3D" id="2.60.40.10">
    <property type="entry name" value="Immunoglobulins"/>
    <property type="match status" value="2"/>
</dbReference>
<dbReference type="InterPro" id="IPR013783">
    <property type="entry name" value="Ig-like_fold"/>
</dbReference>
<dbReference type="InterPro" id="IPR008962">
    <property type="entry name" value="PapD-like_sf"/>
</dbReference>
<dbReference type="InterPro" id="IPR050643">
    <property type="entry name" value="Periplasmic_pilus_chap"/>
</dbReference>
<dbReference type="InterPro" id="IPR036316">
    <property type="entry name" value="Pili_assmbl_chap_C_dom_sf"/>
</dbReference>
<dbReference type="InterPro" id="IPR001829">
    <property type="entry name" value="Pili_assmbl_chaperone_bac"/>
</dbReference>
<dbReference type="InterPro" id="IPR016148">
    <property type="entry name" value="Pili_assmbl_chaperone_C"/>
</dbReference>
<dbReference type="InterPro" id="IPR018046">
    <property type="entry name" value="Pili_assmbl_chaperone_CS"/>
</dbReference>
<dbReference type="InterPro" id="IPR016147">
    <property type="entry name" value="Pili_assmbl_chaperone_N"/>
</dbReference>
<dbReference type="PANTHER" id="PTHR30251:SF9">
    <property type="entry name" value="CHAPERONE PROTEIN CAF1M"/>
    <property type="match status" value="1"/>
</dbReference>
<dbReference type="PANTHER" id="PTHR30251">
    <property type="entry name" value="PILUS ASSEMBLY CHAPERONE"/>
    <property type="match status" value="1"/>
</dbReference>
<dbReference type="Pfam" id="PF02753">
    <property type="entry name" value="PapD_C"/>
    <property type="match status" value="1"/>
</dbReference>
<dbReference type="Pfam" id="PF00345">
    <property type="entry name" value="PapD_N"/>
    <property type="match status" value="1"/>
</dbReference>
<dbReference type="PRINTS" id="PR00969">
    <property type="entry name" value="CHAPERONPILI"/>
</dbReference>
<dbReference type="SUPFAM" id="SSF49354">
    <property type="entry name" value="PapD-like"/>
    <property type="match status" value="1"/>
</dbReference>
<dbReference type="SUPFAM" id="SSF49584">
    <property type="entry name" value="Periplasmic chaperone C-domain"/>
    <property type="match status" value="1"/>
</dbReference>
<dbReference type="PROSITE" id="PS00635">
    <property type="entry name" value="PILI_CHAPERONE"/>
    <property type="match status" value="1"/>
</dbReference>
<feature type="signal peptide" evidence="2">
    <location>
        <begin position="1"/>
        <end position="22"/>
    </location>
</feature>
<feature type="chain" id="PRO_0000009263" description="Chaperone protein AggD">
    <location>
        <begin position="23"/>
        <end position="252"/>
    </location>
</feature>
<organism>
    <name type="scientific">Escherichia coli</name>
    <dbReference type="NCBI Taxonomy" id="562"/>
    <lineage>
        <taxon>Bacteria</taxon>
        <taxon>Pseudomonadati</taxon>
        <taxon>Pseudomonadota</taxon>
        <taxon>Gammaproteobacteria</taxon>
        <taxon>Enterobacterales</taxon>
        <taxon>Enterobacteriaceae</taxon>
        <taxon>Escherichia</taxon>
    </lineage>
</organism>
<accession>P46004</accession>
<reference key="1">
    <citation type="journal article" date="1994" name="J. Bacteriol.">
        <title>Identification and characterization of a gene cluster mediating enteroaggregative Escherichia coli aggregative adherence fimbria I biogenesis.</title>
        <authorList>
            <person name="Savarino S.J."/>
            <person name="Fox P."/>
            <person name="Deng Y."/>
            <person name="Nataro J.P."/>
        </authorList>
    </citation>
    <scope>NUCLEOTIDE SEQUENCE [GENOMIC DNA]</scope>
    <source>
        <strain>O3:H2 / 17-2 / EAggEC</strain>
    </source>
</reference>
<name>AGGD_ECOLX</name>
<gene>
    <name type="primary">aggD</name>
</gene>